<sequence length="455" mass="51009">MTTILKHLPINQRVGIAFSGGLDTSAALLWMQKKGAIPYAYTANLGQPDEEDYEAIPRKAMEYGAEKARLIDCRKQLVAEGIAAIQCGAFHNTTAGVTYFNTTPLGRAVTGTMLVAAMKEDDVNIWGDGSTYKGNDIERFYRYGLLTNAELKIYKPWLDTDFIDELGGRHEMSEFMIQSGFDYKMSTEKAYSTDSNMLGATHEAKDLEFLNSSVKIVNPIMGVKFWDENVVVKAEEVTVRFERGYPVALNGVVFDDSVELMMEANRIGGRHGLGMSDQIENRIIEAKSRGIYEAPGMALLHIAYERLLTGIHNEDTIEQYHANGRVLGRLLYQGRWFDPQALMLRDSIQRWVASEITGEVTLELRRGNDYSILNTVSDNLTYKPERLTMEKGDSVFSPDDRIGQLTMRNLDITDTREKLFNYVETGLLTSSAATGLPQVDNNNLSSGRGLQDKRQ</sequence>
<keyword id="KW-0028">Amino-acid biosynthesis</keyword>
<keyword id="KW-0055">Arginine biosynthesis</keyword>
<keyword id="KW-0067">ATP-binding</keyword>
<keyword id="KW-0963">Cytoplasm</keyword>
<keyword id="KW-0436">Ligase</keyword>
<keyword id="KW-0547">Nucleotide-binding</keyword>
<evidence type="ECO:0000255" key="1">
    <source>
        <dbReference type="HAMAP-Rule" id="MF_00581"/>
    </source>
</evidence>
<evidence type="ECO:0000256" key="2">
    <source>
        <dbReference type="SAM" id="MobiDB-lite"/>
    </source>
</evidence>
<protein>
    <recommendedName>
        <fullName evidence="1">Argininosuccinate synthase</fullName>
        <ecNumber evidence="1">6.3.4.5</ecNumber>
    </recommendedName>
    <alternativeName>
        <fullName evidence="1">Citrulline--aspartate ligase</fullName>
    </alternativeName>
</protein>
<comment type="catalytic activity">
    <reaction evidence="1">
        <text>L-citrulline + L-aspartate + ATP = 2-(N(omega)-L-arginino)succinate + AMP + diphosphate + H(+)</text>
        <dbReference type="Rhea" id="RHEA:10932"/>
        <dbReference type="ChEBI" id="CHEBI:15378"/>
        <dbReference type="ChEBI" id="CHEBI:29991"/>
        <dbReference type="ChEBI" id="CHEBI:30616"/>
        <dbReference type="ChEBI" id="CHEBI:33019"/>
        <dbReference type="ChEBI" id="CHEBI:57472"/>
        <dbReference type="ChEBI" id="CHEBI:57743"/>
        <dbReference type="ChEBI" id="CHEBI:456215"/>
        <dbReference type="EC" id="6.3.4.5"/>
    </reaction>
</comment>
<comment type="pathway">
    <text evidence="1">Amino-acid biosynthesis; L-arginine biosynthesis; L-arginine from L-ornithine and carbamoyl phosphate: step 2/3.</text>
</comment>
<comment type="subunit">
    <text evidence="1">Homotetramer.</text>
</comment>
<comment type="subcellular location">
    <subcellularLocation>
        <location evidence="1">Cytoplasm</location>
    </subcellularLocation>
</comment>
<comment type="similarity">
    <text evidence="1">Belongs to the argininosuccinate synthase family. Type 2 subfamily.</text>
</comment>
<gene>
    <name evidence="1" type="primary">argG</name>
    <name type="ordered locus">YpAngola_A1695</name>
</gene>
<accession>A9R622</accession>
<organism>
    <name type="scientific">Yersinia pestis bv. Antiqua (strain Angola)</name>
    <dbReference type="NCBI Taxonomy" id="349746"/>
    <lineage>
        <taxon>Bacteria</taxon>
        <taxon>Pseudomonadati</taxon>
        <taxon>Pseudomonadota</taxon>
        <taxon>Gammaproteobacteria</taxon>
        <taxon>Enterobacterales</taxon>
        <taxon>Yersiniaceae</taxon>
        <taxon>Yersinia</taxon>
    </lineage>
</organism>
<reference key="1">
    <citation type="journal article" date="2010" name="J. Bacteriol.">
        <title>Genome sequence of the deep-rooted Yersinia pestis strain Angola reveals new insights into the evolution and pangenome of the plague bacterium.</title>
        <authorList>
            <person name="Eppinger M."/>
            <person name="Worsham P.L."/>
            <person name="Nikolich M.P."/>
            <person name="Riley D.R."/>
            <person name="Sebastian Y."/>
            <person name="Mou S."/>
            <person name="Achtman M."/>
            <person name="Lindler L.E."/>
            <person name="Ravel J."/>
        </authorList>
    </citation>
    <scope>NUCLEOTIDE SEQUENCE [LARGE SCALE GENOMIC DNA]</scope>
    <source>
        <strain>Angola</strain>
    </source>
</reference>
<dbReference type="EC" id="6.3.4.5" evidence="1"/>
<dbReference type="EMBL" id="CP000901">
    <property type="protein sequence ID" value="ABX88291.1"/>
    <property type="molecule type" value="Genomic_DNA"/>
</dbReference>
<dbReference type="RefSeq" id="WP_002211920.1">
    <property type="nucleotide sequence ID" value="NZ_CP009935.1"/>
</dbReference>
<dbReference type="SMR" id="A9R622"/>
<dbReference type="GeneID" id="96665184"/>
<dbReference type="KEGG" id="ypg:YpAngola_A1695"/>
<dbReference type="PATRIC" id="fig|349746.12.peg.2666"/>
<dbReference type="UniPathway" id="UPA00068">
    <property type="reaction ID" value="UER00113"/>
</dbReference>
<dbReference type="GO" id="GO:0005737">
    <property type="term" value="C:cytoplasm"/>
    <property type="evidence" value="ECO:0007669"/>
    <property type="project" value="UniProtKB-SubCell"/>
</dbReference>
<dbReference type="GO" id="GO:0004055">
    <property type="term" value="F:argininosuccinate synthase activity"/>
    <property type="evidence" value="ECO:0007669"/>
    <property type="project" value="UniProtKB-UniRule"/>
</dbReference>
<dbReference type="GO" id="GO:0005524">
    <property type="term" value="F:ATP binding"/>
    <property type="evidence" value="ECO:0007669"/>
    <property type="project" value="UniProtKB-UniRule"/>
</dbReference>
<dbReference type="GO" id="GO:0042803">
    <property type="term" value="F:protein homodimerization activity"/>
    <property type="evidence" value="ECO:0007669"/>
    <property type="project" value="InterPro"/>
</dbReference>
<dbReference type="GO" id="GO:0000053">
    <property type="term" value="P:argininosuccinate metabolic process"/>
    <property type="evidence" value="ECO:0007669"/>
    <property type="project" value="TreeGrafter"/>
</dbReference>
<dbReference type="GO" id="GO:0006526">
    <property type="term" value="P:L-arginine biosynthetic process"/>
    <property type="evidence" value="ECO:0007669"/>
    <property type="project" value="UniProtKB-UniRule"/>
</dbReference>
<dbReference type="GO" id="GO:0000050">
    <property type="term" value="P:urea cycle"/>
    <property type="evidence" value="ECO:0007669"/>
    <property type="project" value="TreeGrafter"/>
</dbReference>
<dbReference type="CDD" id="cd01999">
    <property type="entry name" value="ASS"/>
    <property type="match status" value="1"/>
</dbReference>
<dbReference type="FunFam" id="1.10.287.400:FF:000001">
    <property type="entry name" value="Argininosuccinate synthase"/>
    <property type="match status" value="1"/>
</dbReference>
<dbReference type="Gene3D" id="1.10.287.400">
    <property type="match status" value="1"/>
</dbReference>
<dbReference type="Gene3D" id="3.90.1260.10">
    <property type="entry name" value="Argininosuccinate synthetase, chain A, domain 2"/>
    <property type="match status" value="1"/>
</dbReference>
<dbReference type="Gene3D" id="3.40.50.620">
    <property type="entry name" value="HUPs"/>
    <property type="match status" value="1"/>
</dbReference>
<dbReference type="HAMAP" id="MF_00581">
    <property type="entry name" value="Arg_succ_synth_type2"/>
    <property type="match status" value="1"/>
</dbReference>
<dbReference type="InterPro" id="IPR023437">
    <property type="entry name" value="Arg_succ_synth_type2_subfam"/>
</dbReference>
<dbReference type="InterPro" id="IPR048268">
    <property type="entry name" value="Arginosuc_syn_C"/>
</dbReference>
<dbReference type="InterPro" id="IPR048267">
    <property type="entry name" value="Arginosuc_syn_N"/>
</dbReference>
<dbReference type="InterPro" id="IPR001518">
    <property type="entry name" value="Arginosuc_synth"/>
</dbReference>
<dbReference type="InterPro" id="IPR018223">
    <property type="entry name" value="Arginosuc_synth_CS"/>
</dbReference>
<dbReference type="InterPro" id="IPR023434">
    <property type="entry name" value="Arginosuc_synth_type_1_subfam"/>
</dbReference>
<dbReference type="InterPro" id="IPR024074">
    <property type="entry name" value="AS_cat/multimer_dom_body"/>
</dbReference>
<dbReference type="InterPro" id="IPR024073">
    <property type="entry name" value="AS_multimer_C_tail"/>
</dbReference>
<dbReference type="InterPro" id="IPR014729">
    <property type="entry name" value="Rossmann-like_a/b/a_fold"/>
</dbReference>
<dbReference type="NCBIfam" id="TIGR00032">
    <property type="entry name" value="argG"/>
    <property type="match status" value="1"/>
</dbReference>
<dbReference type="NCBIfam" id="NF003779">
    <property type="entry name" value="PRK05370.1"/>
    <property type="match status" value="1"/>
</dbReference>
<dbReference type="PANTHER" id="PTHR11587">
    <property type="entry name" value="ARGININOSUCCINATE SYNTHASE"/>
    <property type="match status" value="1"/>
</dbReference>
<dbReference type="PANTHER" id="PTHR11587:SF2">
    <property type="entry name" value="ARGININOSUCCINATE SYNTHASE"/>
    <property type="match status" value="1"/>
</dbReference>
<dbReference type="Pfam" id="PF20979">
    <property type="entry name" value="Arginosuc_syn_C"/>
    <property type="match status" value="1"/>
</dbReference>
<dbReference type="Pfam" id="PF00764">
    <property type="entry name" value="Arginosuc_synth"/>
    <property type="match status" value="1"/>
</dbReference>
<dbReference type="SUPFAM" id="SSF52402">
    <property type="entry name" value="Adenine nucleotide alpha hydrolases-like"/>
    <property type="match status" value="1"/>
</dbReference>
<dbReference type="SUPFAM" id="SSF69864">
    <property type="entry name" value="Argininosuccinate synthetase, C-terminal domain"/>
    <property type="match status" value="1"/>
</dbReference>
<dbReference type="PROSITE" id="PS00564">
    <property type="entry name" value="ARGININOSUCCIN_SYN_1"/>
    <property type="match status" value="1"/>
</dbReference>
<dbReference type="PROSITE" id="PS00565">
    <property type="entry name" value="ARGININOSUCCIN_SYN_2"/>
    <property type="match status" value="1"/>
</dbReference>
<proteinExistence type="inferred from homology"/>
<feature type="chain" id="PRO_1000129772" description="Argininosuccinate synthase">
    <location>
        <begin position="1"/>
        <end position="455"/>
    </location>
</feature>
<feature type="region of interest" description="Disordered" evidence="2">
    <location>
        <begin position="434"/>
        <end position="455"/>
    </location>
</feature>
<feature type="compositionally biased region" description="Polar residues" evidence="2">
    <location>
        <begin position="434"/>
        <end position="448"/>
    </location>
</feature>
<feature type="binding site" evidence="1">
    <location>
        <begin position="17"/>
        <end position="25"/>
    </location>
    <ligand>
        <name>ATP</name>
        <dbReference type="ChEBI" id="CHEBI:30616"/>
    </ligand>
</feature>
<feature type="binding site" evidence="1">
    <location>
        <position position="43"/>
    </location>
    <ligand>
        <name>ATP</name>
        <dbReference type="ChEBI" id="CHEBI:30616"/>
    </ligand>
</feature>
<feature type="binding site" evidence="1">
    <location>
        <position position="99"/>
    </location>
    <ligand>
        <name>L-citrulline</name>
        <dbReference type="ChEBI" id="CHEBI:57743"/>
    </ligand>
</feature>
<feature type="binding site" evidence="1">
    <location>
        <position position="129"/>
    </location>
    <ligand>
        <name>ATP</name>
        <dbReference type="ChEBI" id="CHEBI:30616"/>
    </ligand>
</feature>
<feature type="binding site" evidence="1">
    <location>
        <position position="131"/>
    </location>
    <ligand>
        <name>ATP</name>
        <dbReference type="ChEBI" id="CHEBI:30616"/>
    </ligand>
</feature>
<feature type="binding site" evidence="1">
    <location>
        <position position="131"/>
    </location>
    <ligand>
        <name>L-aspartate</name>
        <dbReference type="ChEBI" id="CHEBI:29991"/>
    </ligand>
</feature>
<feature type="binding site" evidence="1">
    <location>
        <position position="135"/>
    </location>
    <ligand>
        <name>L-aspartate</name>
        <dbReference type="ChEBI" id="CHEBI:29991"/>
    </ligand>
</feature>
<feature type="binding site" evidence="1">
    <location>
        <position position="135"/>
    </location>
    <ligand>
        <name>L-citrulline</name>
        <dbReference type="ChEBI" id="CHEBI:57743"/>
    </ligand>
</feature>
<feature type="binding site" evidence="1">
    <location>
        <position position="136"/>
    </location>
    <ligand>
        <name>ATP</name>
        <dbReference type="ChEBI" id="CHEBI:30616"/>
    </ligand>
</feature>
<feature type="binding site" evidence="1">
    <location>
        <position position="136"/>
    </location>
    <ligand>
        <name>L-aspartate</name>
        <dbReference type="ChEBI" id="CHEBI:29991"/>
    </ligand>
</feature>
<feature type="binding site" evidence="1">
    <location>
        <position position="139"/>
    </location>
    <ligand>
        <name>L-citrulline</name>
        <dbReference type="ChEBI" id="CHEBI:57743"/>
    </ligand>
</feature>
<feature type="binding site" evidence="1">
    <location>
        <position position="192"/>
    </location>
    <ligand>
        <name>L-citrulline</name>
        <dbReference type="ChEBI" id="CHEBI:57743"/>
    </ligand>
</feature>
<feature type="binding site" evidence="1">
    <location>
        <position position="194"/>
    </location>
    <ligand>
        <name>ATP</name>
        <dbReference type="ChEBI" id="CHEBI:30616"/>
    </ligand>
</feature>
<feature type="binding site" evidence="1">
    <location>
        <position position="201"/>
    </location>
    <ligand>
        <name>L-citrulline</name>
        <dbReference type="ChEBI" id="CHEBI:57743"/>
    </ligand>
</feature>
<feature type="binding site" evidence="1">
    <location>
        <position position="203"/>
    </location>
    <ligand>
        <name>L-citrulline</name>
        <dbReference type="ChEBI" id="CHEBI:57743"/>
    </ligand>
</feature>
<feature type="binding site" evidence="1">
    <location>
        <position position="280"/>
    </location>
    <ligand>
        <name>L-citrulline</name>
        <dbReference type="ChEBI" id="CHEBI:57743"/>
    </ligand>
</feature>
<name>ASSY_YERPG</name>